<feature type="chain" id="PRO_0000299974" description="Ribulose bisphosphate carboxylase large chain">
    <location>
        <begin position="1"/>
        <end position="485"/>
    </location>
</feature>
<feature type="active site" description="Proton acceptor" evidence="1">
    <location>
        <position position="176"/>
    </location>
</feature>
<feature type="active site" description="Proton acceptor" evidence="1">
    <location>
        <position position="294"/>
    </location>
</feature>
<feature type="binding site" description="in homodimeric partner" evidence="1">
    <location>
        <position position="124"/>
    </location>
    <ligand>
        <name>substrate</name>
    </ligand>
</feature>
<feature type="binding site" evidence="1">
    <location>
        <position position="174"/>
    </location>
    <ligand>
        <name>substrate</name>
    </ligand>
</feature>
<feature type="binding site" evidence="1">
    <location>
        <position position="178"/>
    </location>
    <ligand>
        <name>substrate</name>
    </ligand>
</feature>
<feature type="binding site" description="via carbamate group" evidence="1">
    <location>
        <position position="202"/>
    </location>
    <ligand>
        <name>Mg(2+)</name>
        <dbReference type="ChEBI" id="CHEBI:18420"/>
    </ligand>
</feature>
<feature type="binding site" evidence="1">
    <location>
        <position position="204"/>
    </location>
    <ligand>
        <name>Mg(2+)</name>
        <dbReference type="ChEBI" id="CHEBI:18420"/>
    </ligand>
</feature>
<feature type="binding site" evidence="1">
    <location>
        <position position="205"/>
    </location>
    <ligand>
        <name>Mg(2+)</name>
        <dbReference type="ChEBI" id="CHEBI:18420"/>
    </ligand>
</feature>
<feature type="binding site" evidence="1">
    <location>
        <position position="295"/>
    </location>
    <ligand>
        <name>substrate</name>
    </ligand>
</feature>
<feature type="binding site" evidence="1">
    <location>
        <position position="327"/>
    </location>
    <ligand>
        <name>substrate</name>
    </ligand>
</feature>
<feature type="binding site" evidence="1">
    <location>
        <position position="379"/>
    </location>
    <ligand>
        <name>substrate</name>
    </ligand>
</feature>
<feature type="site" description="Transition state stabilizer" evidence="1">
    <location>
        <position position="334"/>
    </location>
</feature>
<feature type="modified residue" description="N6-carboxylysine" evidence="1">
    <location>
        <position position="202"/>
    </location>
</feature>
<protein>
    <recommendedName>
        <fullName evidence="1">Ribulose bisphosphate carboxylase large chain</fullName>
        <shortName evidence="1">RuBisCO large subunit</shortName>
        <ecNumber evidence="1">4.1.1.39</ecNumber>
    </recommendedName>
</protein>
<sequence length="485" mass="53848">MNESVTVRGKDRYKSGVMEYKKMGYWEPDYEPKDTDVIALFRVTPQDGVDPIEASAAVAGESSTATWTVVWTDRLTAAEKYRAKCYRVDPVPNSPGQYFAYIAYDLDLFENGSIANLSASIIGNVFGFKPLKALRLEDMRLPVAYVKTFQGPATGIVVERERMDKFGRPLLGATVKPKLGLSGRNYGRVVYEALKGGLDFTKDDENINSQPFMHWRERFLYCMEAVNKAQAASGEIKGTYLNVTAGTMEDMYERAEFAKQLGSVIIMIDLVIGYTAIQSMAKWARKNDMILHLHRAGHSTYTRQRNHGVSFRVIAKWMRLAGVDHIHAGTVVGKLEGDPATTRGYYDICREDHNPMALEHGVFFEQNWASLNKLMPVASGGIHAGQMHQLLDHLGEDVVLQFGGGTIGHPMGIQAGATANRVALEAMILARNEGRDYLHEGPEILAKAAQTCTPLKAALETWKNVTFNYESTDMPDYAPTPSVSV</sequence>
<accession>Q07RX1</accession>
<dbReference type="EC" id="4.1.1.39" evidence="1"/>
<dbReference type="EMBL" id="CP000463">
    <property type="protein sequence ID" value="ABJ05313.1"/>
    <property type="molecule type" value="Genomic_DNA"/>
</dbReference>
<dbReference type="SMR" id="Q07RX1"/>
<dbReference type="STRING" id="316055.RPE_1361"/>
<dbReference type="KEGG" id="rpe:RPE_1361"/>
<dbReference type="eggNOG" id="COG1850">
    <property type="taxonomic scope" value="Bacteria"/>
</dbReference>
<dbReference type="HOGENOM" id="CLU_031450_2_0_5"/>
<dbReference type="OrthoDB" id="9764279at2"/>
<dbReference type="GO" id="GO:0000287">
    <property type="term" value="F:magnesium ion binding"/>
    <property type="evidence" value="ECO:0007669"/>
    <property type="project" value="UniProtKB-UniRule"/>
</dbReference>
<dbReference type="GO" id="GO:0004497">
    <property type="term" value="F:monooxygenase activity"/>
    <property type="evidence" value="ECO:0007669"/>
    <property type="project" value="UniProtKB-KW"/>
</dbReference>
<dbReference type="GO" id="GO:0016984">
    <property type="term" value="F:ribulose-bisphosphate carboxylase activity"/>
    <property type="evidence" value="ECO:0007669"/>
    <property type="project" value="UniProtKB-UniRule"/>
</dbReference>
<dbReference type="GO" id="GO:0019253">
    <property type="term" value="P:reductive pentose-phosphate cycle"/>
    <property type="evidence" value="ECO:0007669"/>
    <property type="project" value="UniProtKB-UniRule"/>
</dbReference>
<dbReference type="CDD" id="cd08212">
    <property type="entry name" value="RuBisCO_large_I"/>
    <property type="match status" value="1"/>
</dbReference>
<dbReference type="Gene3D" id="3.20.20.110">
    <property type="entry name" value="Ribulose bisphosphate carboxylase, large subunit, C-terminal domain"/>
    <property type="match status" value="1"/>
</dbReference>
<dbReference type="Gene3D" id="3.30.70.150">
    <property type="entry name" value="RuBisCO large subunit, N-terminal domain"/>
    <property type="match status" value="1"/>
</dbReference>
<dbReference type="HAMAP" id="MF_01338">
    <property type="entry name" value="RuBisCO_L_type1"/>
    <property type="match status" value="1"/>
</dbReference>
<dbReference type="InterPro" id="IPR033966">
    <property type="entry name" value="RuBisCO"/>
</dbReference>
<dbReference type="InterPro" id="IPR020878">
    <property type="entry name" value="RuBisCo_large_chain_AS"/>
</dbReference>
<dbReference type="InterPro" id="IPR000685">
    <property type="entry name" value="RuBisCO_lsu_C"/>
</dbReference>
<dbReference type="InterPro" id="IPR036376">
    <property type="entry name" value="RuBisCO_lsu_C_sf"/>
</dbReference>
<dbReference type="InterPro" id="IPR017443">
    <property type="entry name" value="RuBisCO_lsu_fd_N"/>
</dbReference>
<dbReference type="InterPro" id="IPR036422">
    <property type="entry name" value="RuBisCO_lsu_N_sf"/>
</dbReference>
<dbReference type="InterPro" id="IPR020888">
    <property type="entry name" value="RuBisCO_lsuI"/>
</dbReference>
<dbReference type="NCBIfam" id="NF003252">
    <property type="entry name" value="PRK04208.1"/>
    <property type="match status" value="1"/>
</dbReference>
<dbReference type="PANTHER" id="PTHR42704">
    <property type="entry name" value="RIBULOSE BISPHOSPHATE CARBOXYLASE"/>
    <property type="match status" value="1"/>
</dbReference>
<dbReference type="PANTHER" id="PTHR42704:SF17">
    <property type="entry name" value="RIBULOSE BISPHOSPHATE CARBOXYLASE LARGE CHAIN"/>
    <property type="match status" value="1"/>
</dbReference>
<dbReference type="Pfam" id="PF00016">
    <property type="entry name" value="RuBisCO_large"/>
    <property type="match status" value="1"/>
</dbReference>
<dbReference type="Pfam" id="PF02788">
    <property type="entry name" value="RuBisCO_large_N"/>
    <property type="match status" value="1"/>
</dbReference>
<dbReference type="SFLD" id="SFLDG01052">
    <property type="entry name" value="RuBisCO"/>
    <property type="match status" value="1"/>
</dbReference>
<dbReference type="SFLD" id="SFLDS00014">
    <property type="entry name" value="RuBisCO"/>
    <property type="match status" value="1"/>
</dbReference>
<dbReference type="SFLD" id="SFLDG00301">
    <property type="entry name" value="RuBisCO-like_proteins"/>
    <property type="match status" value="1"/>
</dbReference>
<dbReference type="SUPFAM" id="SSF51649">
    <property type="entry name" value="RuBisCo, C-terminal domain"/>
    <property type="match status" value="1"/>
</dbReference>
<dbReference type="SUPFAM" id="SSF54966">
    <property type="entry name" value="RuBisCO, large subunit, small (N-terminal) domain"/>
    <property type="match status" value="1"/>
</dbReference>
<dbReference type="PROSITE" id="PS00157">
    <property type="entry name" value="RUBISCO_LARGE"/>
    <property type="match status" value="1"/>
</dbReference>
<keyword id="KW-0113">Calvin cycle</keyword>
<keyword id="KW-0120">Carbon dioxide fixation</keyword>
<keyword id="KW-0456">Lyase</keyword>
<keyword id="KW-0460">Magnesium</keyword>
<keyword id="KW-0479">Metal-binding</keyword>
<keyword id="KW-0503">Monooxygenase</keyword>
<keyword id="KW-0560">Oxidoreductase</keyword>
<keyword id="KW-0602">Photosynthesis</keyword>
<gene>
    <name evidence="1" type="primary">cbbL</name>
    <name type="ordered locus">RPE_1361</name>
</gene>
<evidence type="ECO:0000255" key="1">
    <source>
        <dbReference type="HAMAP-Rule" id="MF_01338"/>
    </source>
</evidence>
<name>RBL_RHOP5</name>
<proteinExistence type="inferred from homology"/>
<reference key="1">
    <citation type="submission" date="2006-09" db="EMBL/GenBank/DDBJ databases">
        <title>Complete sequence of Rhodopseudomonas palustris BisA53.</title>
        <authorList>
            <consortium name="US DOE Joint Genome Institute"/>
            <person name="Copeland A."/>
            <person name="Lucas S."/>
            <person name="Lapidus A."/>
            <person name="Barry K."/>
            <person name="Detter J.C."/>
            <person name="Glavina del Rio T."/>
            <person name="Hammon N."/>
            <person name="Israni S."/>
            <person name="Dalin E."/>
            <person name="Tice H."/>
            <person name="Pitluck S."/>
            <person name="Chain P."/>
            <person name="Malfatti S."/>
            <person name="Shin M."/>
            <person name="Vergez L."/>
            <person name="Schmutz J."/>
            <person name="Larimer F."/>
            <person name="Land M."/>
            <person name="Hauser L."/>
            <person name="Pelletier D.A."/>
            <person name="Kyrpides N."/>
            <person name="Kim E."/>
            <person name="Harwood C.S."/>
            <person name="Oda Y."/>
            <person name="Richardson P."/>
        </authorList>
    </citation>
    <scope>NUCLEOTIDE SEQUENCE [LARGE SCALE GENOMIC DNA]</scope>
    <source>
        <strain>BisA53</strain>
    </source>
</reference>
<organism>
    <name type="scientific">Rhodopseudomonas palustris (strain BisA53)</name>
    <dbReference type="NCBI Taxonomy" id="316055"/>
    <lineage>
        <taxon>Bacteria</taxon>
        <taxon>Pseudomonadati</taxon>
        <taxon>Pseudomonadota</taxon>
        <taxon>Alphaproteobacteria</taxon>
        <taxon>Hyphomicrobiales</taxon>
        <taxon>Nitrobacteraceae</taxon>
        <taxon>Rhodopseudomonas</taxon>
    </lineage>
</organism>
<comment type="function">
    <text evidence="1">RuBisCO catalyzes two reactions: the carboxylation of D-ribulose 1,5-bisphosphate, the primary event in carbon dioxide fixation, as well as the oxidative fragmentation of the pentose substrate. Both reactions occur simultaneously and in competition at the same active site.</text>
</comment>
<comment type="catalytic activity">
    <reaction evidence="1">
        <text>2 (2R)-3-phosphoglycerate + 2 H(+) = D-ribulose 1,5-bisphosphate + CO2 + H2O</text>
        <dbReference type="Rhea" id="RHEA:23124"/>
        <dbReference type="ChEBI" id="CHEBI:15377"/>
        <dbReference type="ChEBI" id="CHEBI:15378"/>
        <dbReference type="ChEBI" id="CHEBI:16526"/>
        <dbReference type="ChEBI" id="CHEBI:57870"/>
        <dbReference type="ChEBI" id="CHEBI:58272"/>
        <dbReference type="EC" id="4.1.1.39"/>
    </reaction>
</comment>
<comment type="catalytic activity">
    <reaction evidence="1">
        <text>D-ribulose 1,5-bisphosphate + O2 = 2-phosphoglycolate + (2R)-3-phosphoglycerate + 2 H(+)</text>
        <dbReference type="Rhea" id="RHEA:36631"/>
        <dbReference type="ChEBI" id="CHEBI:15378"/>
        <dbReference type="ChEBI" id="CHEBI:15379"/>
        <dbReference type="ChEBI" id="CHEBI:57870"/>
        <dbReference type="ChEBI" id="CHEBI:58033"/>
        <dbReference type="ChEBI" id="CHEBI:58272"/>
    </reaction>
</comment>
<comment type="cofactor">
    <cofactor evidence="1">
        <name>Mg(2+)</name>
        <dbReference type="ChEBI" id="CHEBI:18420"/>
    </cofactor>
    <text evidence="1">Binds 1 Mg(2+) ion per subunit.</text>
</comment>
<comment type="subunit">
    <text evidence="1">Heterohexadecamer of 8 large chains and 8 small chains.</text>
</comment>
<comment type="miscellaneous">
    <text evidence="1">The basic functional RuBisCO is composed of a large chain homodimer in a 'head-to-tail' conformation. In form I RuBisCO this homodimer is arranged in a barrel-like tetramer with the small subunits forming a tetrameric 'cap' on each end of the 'barrel'.</text>
</comment>
<comment type="similarity">
    <text evidence="1">Belongs to the RuBisCO large chain family. Type I subfamily.</text>
</comment>